<name>MUTS_BACAC</name>
<gene>
    <name evidence="1" type="primary">mutS</name>
    <name type="ordered locus">BAMEG_0726</name>
</gene>
<proteinExistence type="inferred from homology"/>
<comment type="function">
    <text evidence="1">This protein is involved in the repair of mismatches in DNA. It is possible that it carries out the mismatch recognition step. This protein has a weak ATPase activity.</text>
</comment>
<comment type="similarity">
    <text evidence="1">Belongs to the DNA mismatch repair MutS family.</text>
</comment>
<protein>
    <recommendedName>
        <fullName evidence="1">DNA mismatch repair protein MutS</fullName>
    </recommendedName>
</protein>
<feature type="chain" id="PRO_1000192195" description="DNA mismatch repair protein MutS">
    <location>
        <begin position="1"/>
        <end position="892"/>
    </location>
</feature>
<feature type="region of interest" description="Disordered" evidence="2">
    <location>
        <begin position="833"/>
        <end position="855"/>
    </location>
</feature>
<feature type="compositionally biased region" description="Basic and acidic residues" evidence="2">
    <location>
        <begin position="845"/>
        <end position="855"/>
    </location>
</feature>
<feature type="binding site" evidence="1">
    <location>
        <begin position="607"/>
        <end position="614"/>
    </location>
    <ligand>
        <name>ATP</name>
        <dbReference type="ChEBI" id="CHEBI:30616"/>
    </ligand>
</feature>
<keyword id="KW-0067">ATP-binding</keyword>
<keyword id="KW-0227">DNA damage</keyword>
<keyword id="KW-0234">DNA repair</keyword>
<keyword id="KW-0238">DNA-binding</keyword>
<keyword id="KW-0547">Nucleotide-binding</keyword>
<reference key="1">
    <citation type="submission" date="2008-10" db="EMBL/GenBank/DDBJ databases">
        <title>Genome sequence of Bacillus anthracis str. CDC 684.</title>
        <authorList>
            <person name="Dodson R.J."/>
            <person name="Munk A.C."/>
            <person name="Brettin T."/>
            <person name="Bruce D."/>
            <person name="Detter C."/>
            <person name="Tapia R."/>
            <person name="Han C."/>
            <person name="Sutton G."/>
            <person name="Sims D."/>
        </authorList>
    </citation>
    <scope>NUCLEOTIDE SEQUENCE [LARGE SCALE GENOMIC DNA]</scope>
    <source>
        <strain>CDC 684 / NRRL 3495</strain>
    </source>
</reference>
<organism>
    <name type="scientific">Bacillus anthracis (strain CDC 684 / NRRL 3495)</name>
    <dbReference type="NCBI Taxonomy" id="568206"/>
    <lineage>
        <taxon>Bacteria</taxon>
        <taxon>Bacillati</taxon>
        <taxon>Bacillota</taxon>
        <taxon>Bacilli</taxon>
        <taxon>Bacillales</taxon>
        <taxon>Bacillaceae</taxon>
        <taxon>Bacillus</taxon>
        <taxon>Bacillus cereus group</taxon>
    </lineage>
</organism>
<sequence>MTQYTPMIQQYLKVKADYQDAFLFFRLGDFYEMFFEDAVKAAHELEITLTSRDGGSSERIPMCGVPYHAAKNYIEQLVEKGYKVAVCEQVEDPKTAKGVVRREVVQLITPGTMMEGRTIDEKENNFLAALTHFEDGSYALACNDLTTGQNTVTLLTGSVEDILLEVYATGSKEIVVDSSFSKDELNKLTETLKMTISYEDATAIPEGLEHLVKNVSQAKLIKAVGRLFNYVIRTQKRSLDHLQPVEIYYTNQFMKIDVHSKRNLELTETLRTKEKTGSLLWLLDKTKTAMGGRMLKQWMERPLIQKERIEERLEMVETFVNDYFLREDLKEKLKEVYDLERLAGKVAFGNVNARDLLQLRRSLLQVPAILEAISLLDNAYAARLIQGADPCESLTELLGRSIQENPPLSIKDGDIIKDGYNDKLDQYRYVSKNGKTWIAELEKRERDITGIKSLKIGYNRIFGYYIEVTKANLGALPEGRYERKQTLANAERFITDELKEKETLILEAEEKIVQLEYDLFTALREEVKVFIPKLQHLAKVISELDVLQSFATVSEEEQFVKPVLTTKREIFIKDGRHPVVEKVLNGKLYVPNDCIMPENMDVFLITGPNMSGKSTYMRQLALVTVMSQIGCFVPATEAVLPVFDQIFTRIGAADDLISGQSTFMVEMLEAKNAIANASERSLILFDEIGRGTSTYDGMALAQAIIEHIHDQIGAKTLFSTHYHELTVLEDSLDQLKNVHVSAIEENGKVVFLHKIQDGAADKSYGIHVAQLAELPDSLIARAKEVLAQLEGQEEIVIPKRVEVKAQEQEVIPEPIVVKEEPIEIEETKVDNEEESQLSFFGAEQSSKKQDKPALDAKETAVLTQIKKIDLLDMTPLEAMNELYRLQKKLKKG</sequence>
<evidence type="ECO:0000255" key="1">
    <source>
        <dbReference type="HAMAP-Rule" id="MF_00096"/>
    </source>
</evidence>
<evidence type="ECO:0000256" key="2">
    <source>
        <dbReference type="SAM" id="MobiDB-lite"/>
    </source>
</evidence>
<dbReference type="EMBL" id="CP001215">
    <property type="protein sequence ID" value="ACP17432.1"/>
    <property type="molecule type" value="Genomic_DNA"/>
</dbReference>
<dbReference type="RefSeq" id="WP_000196009.1">
    <property type="nucleotide sequence ID" value="NC_012581.1"/>
</dbReference>
<dbReference type="SMR" id="C3L822"/>
<dbReference type="GeneID" id="45023598"/>
<dbReference type="KEGG" id="bah:BAMEG_0726"/>
<dbReference type="HOGENOM" id="CLU_002472_3_1_9"/>
<dbReference type="GO" id="GO:0005829">
    <property type="term" value="C:cytosol"/>
    <property type="evidence" value="ECO:0007669"/>
    <property type="project" value="TreeGrafter"/>
</dbReference>
<dbReference type="GO" id="GO:0005524">
    <property type="term" value="F:ATP binding"/>
    <property type="evidence" value="ECO:0007669"/>
    <property type="project" value="UniProtKB-UniRule"/>
</dbReference>
<dbReference type="GO" id="GO:0140664">
    <property type="term" value="F:ATP-dependent DNA damage sensor activity"/>
    <property type="evidence" value="ECO:0007669"/>
    <property type="project" value="InterPro"/>
</dbReference>
<dbReference type="GO" id="GO:0003684">
    <property type="term" value="F:damaged DNA binding"/>
    <property type="evidence" value="ECO:0007669"/>
    <property type="project" value="UniProtKB-UniRule"/>
</dbReference>
<dbReference type="GO" id="GO:0030983">
    <property type="term" value="F:mismatched DNA binding"/>
    <property type="evidence" value="ECO:0007669"/>
    <property type="project" value="InterPro"/>
</dbReference>
<dbReference type="GO" id="GO:0006298">
    <property type="term" value="P:mismatch repair"/>
    <property type="evidence" value="ECO:0007669"/>
    <property type="project" value="UniProtKB-UniRule"/>
</dbReference>
<dbReference type="CDD" id="cd03284">
    <property type="entry name" value="ABC_MutS1"/>
    <property type="match status" value="1"/>
</dbReference>
<dbReference type="FunFam" id="1.10.1420.10:FF:000007">
    <property type="entry name" value="DNA mismatch repair protein MutS"/>
    <property type="match status" value="1"/>
</dbReference>
<dbReference type="FunFam" id="3.30.420.110:FF:000007">
    <property type="entry name" value="DNA mismatch repair protein MutS"/>
    <property type="match status" value="1"/>
</dbReference>
<dbReference type="FunFam" id="3.40.1170.10:FF:000001">
    <property type="entry name" value="DNA mismatch repair protein MutS"/>
    <property type="match status" value="1"/>
</dbReference>
<dbReference type="FunFam" id="3.40.50.300:FF:000896">
    <property type="entry name" value="DNA mismatch repair protein MutS"/>
    <property type="match status" value="1"/>
</dbReference>
<dbReference type="Gene3D" id="1.10.1420.10">
    <property type="match status" value="2"/>
</dbReference>
<dbReference type="Gene3D" id="3.40.1170.10">
    <property type="entry name" value="DNA repair protein MutS, domain I"/>
    <property type="match status" value="1"/>
</dbReference>
<dbReference type="Gene3D" id="3.30.420.110">
    <property type="entry name" value="MutS, connector domain"/>
    <property type="match status" value="1"/>
</dbReference>
<dbReference type="Gene3D" id="3.40.50.300">
    <property type="entry name" value="P-loop containing nucleotide triphosphate hydrolases"/>
    <property type="match status" value="1"/>
</dbReference>
<dbReference type="HAMAP" id="MF_00096">
    <property type="entry name" value="MutS"/>
    <property type="match status" value="1"/>
</dbReference>
<dbReference type="InterPro" id="IPR005748">
    <property type="entry name" value="DNA_mismatch_repair_MutS"/>
</dbReference>
<dbReference type="InterPro" id="IPR007695">
    <property type="entry name" value="DNA_mismatch_repair_MutS-lik_N"/>
</dbReference>
<dbReference type="InterPro" id="IPR017261">
    <property type="entry name" value="DNA_mismatch_repair_MutS/MSH"/>
</dbReference>
<dbReference type="InterPro" id="IPR000432">
    <property type="entry name" value="DNA_mismatch_repair_MutS_C"/>
</dbReference>
<dbReference type="InterPro" id="IPR007861">
    <property type="entry name" value="DNA_mismatch_repair_MutS_clamp"/>
</dbReference>
<dbReference type="InterPro" id="IPR007696">
    <property type="entry name" value="DNA_mismatch_repair_MutS_core"/>
</dbReference>
<dbReference type="InterPro" id="IPR016151">
    <property type="entry name" value="DNA_mismatch_repair_MutS_N"/>
</dbReference>
<dbReference type="InterPro" id="IPR036187">
    <property type="entry name" value="DNA_mismatch_repair_MutS_sf"/>
</dbReference>
<dbReference type="InterPro" id="IPR007860">
    <property type="entry name" value="DNA_mmatch_repair_MutS_con_dom"/>
</dbReference>
<dbReference type="InterPro" id="IPR045076">
    <property type="entry name" value="MutS"/>
</dbReference>
<dbReference type="InterPro" id="IPR036678">
    <property type="entry name" value="MutS_con_dom_sf"/>
</dbReference>
<dbReference type="InterPro" id="IPR027417">
    <property type="entry name" value="P-loop_NTPase"/>
</dbReference>
<dbReference type="NCBIfam" id="TIGR01070">
    <property type="entry name" value="mutS1"/>
    <property type="match status" value="1"/>
</dbReference>
<dbReference type="NCBIfam" id="NF003810">
    <property type="entry name" value="PRK05399.1"/>
    <property type="match status" value="1"/>
</dbReference>
<dbReference type="PANTHER" id="PTHR11361:SF34">
    <property type="entry name" value="DNA MISMATCH REPAIR PROTEIN MSH1, MITOCHONDRIAL"/>
    <property type="match status" value="1"/>
</dbReference>
<dbReference type="PANTHER" id="PTHR11361">
    <property type="entry name" value="DNA MISMATCH REPAIR PROTEIN MUTS FAMILY MEMBER"/>
    <property type="match status" value="1"/>
</dbReference>
<dbReference type="Pfam" id="PF01624">
    <property type="entry name" value="MutS_I"/>
    <property type="match status" value="1"/>
</dbReference>
<dbReference type="Pfam" id="PF05188">
    <property type="entry name" value="MutS_II"/>
    <property type="match status" value="1"/>
</dbReference>
<dbReference type="Pfam" id="PF05192">
    <property type="entry name" value="MutS_III"/>
    <property type="match status" value="1"/>
</dbReference>
<dbReference type="Pfam" id="PF05190">
    <property type="entry name" value="MutS_IV"/>
    <property type="match status" value="1"/>
</dbReference>
<dbReference type="Pfam" id="PF00488">
    <property type="entry name" value="MutS_V"/>
    <property type="match status" value="1"/>
</dbReference>
<dbReference type="PIRSF" id="PIRSF037677">
    <property type="entry name" value="DNA_mis_repair_Msh6"/>
    <property type="match status" value="1"/>
</dbReference>
<dbReference type="SMART" id="SM00534">
    <property type="entry name" value="MUTSac"/>
    <property type="match status" value="1"/>
</dbReference>
<dbReference type="SMART" id="SM00533">
    <property type="entry name" value="MUTSd"/>
    <property type="match status" value="1"/>
</dbReference>
<dbReference type="SUPFAM" id="SSF55271">
    <property type="entry name" value="DNA repair protein MutS, domain I"/>
    <property type="match status" value="1"/>
</dbReference>
<dbReference type="SUPFAM" id="SSF53150">
    <property type="entry name" value="DNA repair protein MutS, domain II"/>
    <property type="match status" value="1"/>
</dbReference>
<dbReference type="SUPFAM" id="SSF48334">
    <property type="entry name" value="DNA repair protein MutS, domain III"/>
    <property type="match status" value="1"/>
</dbReference>
<dbReference type="SUPFAM" id="SSF52540">
    <property type="entry name" value="P-loop containing nucleoside triphosphate hydrolases"/>
    <property type="match status" value="1"/>
</dbReference>
<dbReference type="PROSITE" id="PS00486">
    <property type="entry name" value="DNA_MISMATCH_REPAIR_2"/>
    <property type="match status" value="1"/>
</dbReference>
<accession>C3L822</accession>